<name>DSBD_CROS8</name>
<evidence type="ECO:0000255" key="1">
    <source>
        <dbReference type="HAMAP-Rule" id="MF_00399"/>
    </source>
</evidence>
<evidence type="ECO:0000256" key="2">
    <source>
        <dbReference type="SAM" id="MobiDB-lite"/>
    </source>
</evidence>
<keyword id="KW-0997">Cell inner membrane</keyword>
<keyword id="KW-1003">Cell membrane</keyword>
<keyword id="KW-0201">Cytochrome c-type biogenesis</keyword>
<keyword id="KW-1015">Disulfide bond</keyword>
<keyword id="KW-0249">Electron transport</keyword>
<keyword id="KW-0472">Membrane</keyword>
<keyword id="KW-0520">NAD</keyword>
<keyword id="KW-0560">Oxidoreductase</keyword>
<keyword id="KW-0676">Redox-active center</keyword>
<keyword id="KW-1185">Reference proteome</keyword>
<keyword id="KW-0732">Signal</keyword>
<keyword id="KW-0812">Transmembrane</keyword>
<keyword id="KW-1133">Transmembrane helix</keyword>
<keyword id="KW-0813">Transport</keyword>
<reference key="1">
    <citation type="journal article" date="2010" name="PLoS ONE">
        <title>Genome sequence of Cronobacter sakazakii BAA-894 and comparative genomic hybridization analysis with other Cronobacter species.</title>
        <authorList>
            <person name="Kucerova E."/>
            <person name="Clifton S.W."/>
            <person name="Xia X.Q."/>
            <person name="Long F."/>
            <person name="Porwollik S."/>
            <person name="Fulton L."/>
            <person name="Fronick C."/>
            <person name="Minx P."/>
            <person name="Kyung K."/>
            <person name="Warren W."/>
            <person name="Fulton R."/>
            <person name="Feng D."/>
            <person name="Wollam A."/>
            <person name="Shah N."/>
            <person name="Bhonagiri V."/>
            <person name="Nash W.E."/>
            <person name="Hallsworth-Pepin K."/>
            <person name="Wilson R.K."/>
            <person name="McClelland M."/>
            <person name="Forsythe S.J."/>
        </authorList>
    </citation>
    <scope>NUCLEOTIDE SEQUENCE [LARGE SCALE GENOMIC DNA]</scope>
    <source>
        <strain>ATCC BAA-894</strain>
    </source>
</reference>
<gene>
    <name evidence="1" type="primary">dsbD</name>
    <name type="ordered locus">ESA_00148</name>
</gene>
<feature type="signal peptide" evidence="1">
    <location>
        <begin position="1"/>
        <end position="19"/>
    </location>
</feature>
<feature type="chain" id="PRO_1000049608" description="Thiol:disulfide interchange protein DsbD">
    <location>
        <begin position="20"/>
        <end position="574"/>
    </location>
</feature>
<feature type="transmembrane region" description="Helical" evidence="1">
    <location>
        <begin position="173"/>
        <end position="193"/>
    </location>
</feature>
<feature type="transmembrane region" description="Helical" evidence="1">
    <location>
        <begin position="218"/>
        <end position="238"/>
    </location>
</feature>
<feature type="transmembrane region" description="Helical" evidence="1">
    <location>
        <begin position="253"/>
        <end position="273"/>
    </location>
</feature>
<feature type="transmembrane region" description="Helical" evidence="1">
    <location>
        <begin position="306"/>
        <end position="326"/>
    </location>
</feature>
<feature type="transmembrane region" description="Helical" evidence="1">
    <location>
        <begin position="333"/>
        <end position="353"/>
    </location>
</feature>
<feature type="transmembrane region" description="Helical" evidence="1">
    <location>
        <begin position="367"/>
        <end position="387"/>
    </location>
</feature>
<feature type="transmembrane region" description="Helical" evidence="1">
    <location>
        <begin position="399"/>
        <end position="419"/>
    </location>
</feature>
<feature type="domain" description="Thioredoxin" evidence="1">
    <location>
        <begin position="430"/>
        <end position="574"/>
    </location>
</feature>
<feature type="region of interest" description="Disordered" evidence="2">
    <location>
        <begin position="147"/>
        <end position="169"/>
    </location>
</feature>
<feature type="compositionally biased region" description="Polar residues" evidence="2">
    <location>
        <begin position="152"/>
        <end position="169"/>
    </location>
</feature>
<feature type="disulfide bond" description="Redox-active" evidence="1">
    <location>
        <begin position="122"/>
        <end position="128"/>
    </location>
</feature>
<feature type="disulfide bond" description="Redox-active" evidence="1">
    <location>
        <begin position="192"/>
        <end position="314"/>
    </location>
</feature>
<feature type="disulfide bond" description="Redox-active" evidence="1">
    <location>
        <begin position="489"/>
        <end position="492"/>
    </location>
</feature>
<protein>
    <recommendedName>
        <fullName evidence="1">Thiol:disulfide interchange protein DsbD</fullName>
        <ecNumber evidence="1">1.8.1.8</ecNumber>
    </recommendedName>
    <alternativeName>
        <fullName evidence="1">Protein-disulfide reductase</fullName>
        <shortName evidence="1">Disulfide reductase</shortName>
    </alternativeName>
</protein>
<dbReference type="EC" id="1.8.1.8" evidence="1"/>
<dbReference type="EMBL" id="CP000783">
    <property type="protein sequence ID" value="ABU75452.1"/>
    <property type="molecule type" value="Genomic_DNA"/>
</dbReference>
<dbReference type="RefSeq" id="WP_012123666.1">
    <property type="nucleotide sequence ID" value="NC_009778.1"/>
</dbReference>
<dbReference type="SMR" id="A7MMC7"/>
<dbReference type="KEGG" id="esa:ESA_00148"/>
<dbReference type="PATRIC" id="fig|290339.8.peg.129"/>
<dbReference type="HOGENOM" id="CLU_014657_3_0_6"/>
<dbReference type="Proteomes" id="UP000000260">
    <property type="component" value="Chromosome"/>
</dbReference>
<dbReference type="GO" id="GO:0005886">
    <property type="term" value="C:plasma membrane"/>
    <property type="evidence" value="ECO:0007669"/>
    <property type="project" value="UniProtKB-SubCell"/>
</dbReference>
<dbReference type="GO" id="GO:0009055">
    <property type="term" value="F:electron transfer activity"/>
    <property type="evidence" value="ECO:0007669"/>
    <property type="project" value="UniProtKB-UniRule"/>
</dbReference>
<dbReference type="GO" id="GO:0047134">
    <property type="term" value="F:protein-disulfide reductase [NAD(P)H] activity"/>
    <property type="evidence" value="ECO:0007669"/>
    <property type="project" value="UniProtKB-UniRule"/>
</dbReference>
<dbReference type="GO" id="GO:0045454">
    <property type="term" value="P:cell redox homeostasis"/>
    <property type="evidence" value="ECO:0007669"/>
    <property type="project" value="TreeGrafter"/>
</dbReference>
<dbReference type="GO" id="GO:0017004">
    <property type="term" value="P:cytochrome complex assembly"/>
    <property type="evidence" value="ECO:0007669"/>
    <property type="project" value="UniProtKB-UniRule"/>
</dbReference>
<dbReference type="CDD" id="cd02953">
    <property type="entry name" value="DsbDgamma"/>
    <property type="match status" value="1"/>
</dbReference>
<dbReference type="FunFam" id="2.60.40.1250:FF:000001">
    <property type="entry name" value="Thiol:disulfide interchange protein DsbD"/>
    <property type="match status" value="1"/>
</dbReference>
<dbReference type="FunFam" id="3.40.30.10:FF:000116">
    <property type="entry name" value="Thiol:disulfide interchange protein DsbD"/>
    <property type="match status" value="1"/>
</dbReference>
<dbReference type="Gene3D" id="3.40.30.10">
    <property type="entry name" value="Glutaredoxin"/>
    <property type="match status" value="1"/>
</dbReference>
<dbReference type="Gene3D" id="2.60.40.1250">
    <property type="entry name" value="Thiol:disulfide interchange protein DsbD, N-terminal domain"/>
    <property type="match status" value="1"/>
</dbReference>
<dbReference type="HAMAP" id="MF_00399">
    <property type="entry name" value="DbsD"/>
    <property type="match status" value="1"/>
</dbReference>
<dbReference type="InterPro" id="IPR003834">
    <property type="entry name" value="Cyt_c_assmbl_TM_dom"/>
</dbReference>
<dbReference type="InterPro" id="IPR035671">
    <property type="entry name" value="DsbD_gamma"/>
</dbReference>
<dbReference type="InterPro" id="IPR028250">
    <property type="entry name" value="DsbDN"/>
</dbReference>
<dbReference type="InterPro" id="IPR036929">
    <property type="entry name" value="DsbDN_sf"/>
</dbReference>
<dbReference type="InterPro" id="IPR022910">
    <property type="entry name" value="Thiol_diS_interchange_DbsD"/>
</dbReference>
<dbReference type="InterPro" id="IPR036249">
    <property type="entry name" value="Thioredoxin-like_sf"/>
</dbReference>
<dbReference type="InterPro" id="IPR017937">
    <property type="entry name" value="Thioredoxin_CS"/>
</dbReference>
<dbReference type="InterPro" id="IPR013766">
    <property type="entry name" value="Thioredoxin_domain"/>
</dbReference>
<dbReference type="NCBIfam" id="NF001419">
    <property type="entry name" value="PRK00293.1"/>
    <property type="match status" value="1"/>
</dbReference>
<dbReference type="PANTHER" id="PTHR32234">
    <property type="entry name" value="THIOL:DISULFIDE INTERCHANGE PROTEIN DSBD"/>
    <property type="match status" value="1"/>
</dbReference>
<dbReference type="PANTHER" id="PTHR32234:SF0">
    <property type="entry name" value="THIOL:DISULFIDE INTERCHANGE PROTEIN DSBD"/>
    <property type="match status" value="1"/>
</dbReference>
<dbReference type="Pfam" id="PF11412">
    <property type="entry name" value="DsbD_N"/>
    <property type="match status" value="1"/>
</dbReference>
<dbReference type="Pfam" id="PF02683">
    <property type="entry name" value="DsbD_TM"/>
    <property type="match status" value="1"/>
</dbReference>
<dbReference type="Pfam" id="PF13899">
    <property type="entry name" value="Thioredoxin_7"/>
    <property type="match status" value="1"/>
</dbReference>
<dbReference type="SUPFAM" id="SSF74863">
    <property type="entry name" value="Thiol:disulfide interchange protein DsbD, N-terminal domain (DsbD-alpha)"/>
    <property type="match status" value="1"/>
</dbReference>
<dbReference type="SUPFAM" id="SSF52833">
    <property type="entry name" value="Thioredoxin-like"/>
    <property type="match status" value="1"/>
</dbReference>
<dbReference type="PROSITE" id="PS00194">
    <property type="entry name" value="THIOREDOXIN_1"/>
    <property type="match status" value="1"/>
</dbReference>
<dbReference type="PROSITE" id="PS51352">
    <property type="entry name" value="THIOREDOXIN_2"/>
    <property type="match status" value="1"/>
</dbReference>
<organism>
    <name type="scientific">Cronobacter sakazakii (strain ATCC BAA-894)</name>
    <name type="common">Enterobacter sakazakii</name>
    <dbReference type="NCBI Taxonomy" id="290339"/>
    <lineage>
        <taxon>Bacteria</taxon>
        <taxon>Pseudomonadati</taxon>
        <taxon>Pseudomonadota</taxon>
        <taxon>Gammaproteobacteria</taxon>
        <taxon>Enterobacterales</taxon>
        <taxon>Enterobacteriaceae</taxon>
        <taxon>Cronobacter</taxon>
    </lineage>
</organism>
<sequence length="574" mass="61676">MAHRILTLILLFCSAHASASLFGQQNASQFVPADQAFAFDFQQQQHQLTLNWQIKPGYYLYRQQIRVTPANASVAPPALPTGEPHEDEFFGKSEIYRDALSVPVTVEQAAPGATLSVTYQGCAEAGFCYPPETRTVPLSAVEPTESVKANAATPSAATGEQTRVNSDSPSATLPFSAFWALLIGIGVAFTPCVLPMYPLISGIVLGGDKRLSTRRALLLAFIYVQGMALTYTALGLVVAAAGLQFQAALQSPWVLVTLSAVFVLLALSMFGLFTLQLPASLQTRLTLMSNRQRGGSPGGVFAMGAIAGLICSPCTTAPLSAILLYIAQSGNLWLGGGTLYLYALGMGLPLILVTVFGNRLLPKSGPWMEQVKTAFGFVILALPVFLLERVLGEPWGVRLWSVLGVAFFGWAFVTSLNATRSWMRAVQIVLLGAAMICARPLQDWVFGAPVAESQAHLAFTRIATVDDLDRALAQAKGKPVMLDLYADWCVACKEFEKYTFSAPEVQRALDGAVLLQADVTANSAADVALLKRLNVLGLPTIIFFDAQGNEIPNGRVTGFMDAPAFATHLHNRLR</sequence>
<accession>A7MMC7</accession>
<proteinExistence type="inferred from homology"/>
<comment type="function">
    <text evidence="1">Required to facilitate the formation of correct disulfide bonds in some periplasmic proteins and for the assembly of the periplasmic c-type cytochromes. Acts by transferring electrons from cytoplasmic thioredoxin to the periplasm. This transfer involves a cascade of disulfide bond formation and reduction steps.</text>
</comment>
<comment type="catalytic activity">
    <reaction evidence="1">
        <text>[protein]-dithiol + NAD(+) = [protein]-disulfide + NADH + H(+)</text>
        <dbReference type="Rhea" id="RHEA:18749"/>
        <dbReference type="Rhea" id="RHEA-COMP:10593"/>
        <dbReference type="Rhea" id="RHEA-COMP:10594"/>
        <dbReference type="ChEBI" id="CHEBI:15378"/>
        <dbReference type="ChEBI" id="CHEBI:29950"/>
        <dbReference type="ChEBI" id="CHEBI:50058"/>
        <dbReference type="ChEBI" id="CHEBI:57540"/>
        <dbReference type="ChEBI" id="CHEBI:57945"/>
        <dbReference type="EC" id="1.8.1.8"/>
    </reaction>
</comment>
<comment type="catalytic activity">
    <reaction evidence="1">
        <text>[protein]-dithiol + NADP(+) = [protein]-disulfide + NADPH + H(+)</text>
        <dbReference type="Rhea" id="RHEA:18753"/>
        <dbReference type="Rhea" id="RHEA-COMP:10593"/>
        <dbReference type="Rhea" id="RHEA-COMP:10594"/>
        <dbReference type="ChEBI" id="CHEBI:15378"/>
        <dbReference type="ChEBI" id="CHEBI:29950"/>
        <dbReference type="ChEBI" id="CHEBI:50058"/>
        <dbReference type="ChEBI" id="CHEBI:57783"/>
        <dbReference type="ChEBI" id="CHEBI:58349"/>
        <dbReference type="EC" id="1.8.1.8"/>
    </reaction>
</comment>
<comment type="subcellular location">
    <subcellularLocation>
        <location evidence="1">Cell inner membrane</location>
        <topology evidence="1">Multi-pass membrane protein</topology>
    </subcellularLocation>
</comment>
<comment type="similarity">
    <text evidence="1">Belongs to the thioredoxin family. DsbD subfamily.</text>
</comment>